<gene>
    <name type="primary">PLP9</name>
    <name type="ordered locus">At3g63200</name>
    <name type="ORF">F16M2.50</name>
</gene>
<reference key="1">
    <citation type="journal article" date="2000" name="Nature">
        <title>Sequence and analysis of chromosome 3 of the plant Arabidopsis thaliana.</title>
        <authorList>
            <person name="Salanoubat M."/>
            <person name="Lemcke K."/>
            <person name="Rieger M."/>
            <person name="Ansorge W."/>
            <person name="Unseld M."/>
            <person name="Fartmann B."/>
            <person name="Valle G."/>
            <person name="Bloecker H."/>
            <person name="Perez-Alonso M."/>
            <person name="Obermaier B."/>
            <person name="Delseny M."/>
            <person name="Boutry M."/>
            <person name="Grivell L.A."/>
            <person name="Mache R."/>
            <person name="Puigdomenech P."/>
            <person name="De Simone V."/>
            <person name="Choisne N."/>
            <person name="Artiguenave F."/>
            <person name="Robert C."/>
            <person name="Brottier P."/>
            <person name="Wincker P."/>
            <person name="Cattolico L."/>
            <person name="Weissenbach J."/>
            <person name="Saurin W."/>
            <person name="Quetier F."/>
            <person name="Schaefer M."/>
            <person name="Mueller-Auer S."/>
            <person name="Gabel C."/>
            <person name="Fuchs M."/>
            <person name="Benes V."/>
            <person name="Wurmbach E."/>
            <person name="Drzonek H."/>
            <person name="Erfle H."/>
            <person name="Jordan N."/>
            <person name="Bangert S."/>
            <person name="Wiedelmann R."/>
            <person name="Kranz H."/>
            <person name="Voss H."/>
            <person name="Holland R."/>
            <person name="Brandt P."/>
            <person name="Nyakatura G."/>
            <person name="Vezzi A."/>
            <person name="D'Angelo M."/>
            <person name="Pallavicini A."/>
            <person name="Toppo S."/>
            <person name="Simionati B."/>
            <person name="Conrad A."/>
            <person name="Hornischer K."/>
            <person name="Kauer G."/>
            <person name="Loehnert T.-H."/>
            <person name="Nordsiek G."/>
            <person name="Reichelt J."/>
            <person name="Scharfe M."/>
            <person name="Schoen O."/>
            <person name="Bargues M."/>
            <person name="Terol J."/>
            <person name="Climent J."/>
            <person name="Navarro P."/>
            <person name="Collado C."/>
            <person name="Perez-Perez A."/>
            <person name="Ottenwaelder B."/>
            <person name="Duchemin D."/>
            <person name="Cooke R."/>
            <person name="Laudie M."/>
            <person name="Berger-Llauro C."/>
            <person name="Purnelle B."/>
            <person name="Masuy D."/>
            <person name="de Haan M."/>
            <person name="Maarse A.C."/>
            <person name="Alcaraz J.-P."/>
            <person name="Cottet A."/>
            <person name="Casacuberta E."/>
            <person name="Monfort A."/>
            <person name="Argiriou A."/>
            <person name="Flores M."/>
            <person name="Liguori R."/>
            <person name="Vitale D."/>
            <person name="Mannhaupt G."/>
            <person name="Haase D."/>
            <person name="Schoof H."/>
            <person name="Rudd S."/>
            <person name="Zaccaria P."/>
            <person name="Mewes H.-W."/>
            <person name="Mayer K.F.X."/>
            <person name="Kaul S."/>
            <person name="Town C.D."/>
            <person name="Koo H.L."/>
            <person name="Tallon L.J."/>
            <person name="Jenkins J."/>
            <person name="Rooney T."/>
            <person name="Rizzo M."/>
            <person name="Walts A."/>
            <person name="Utterback T."/>
            <person name="Fujii C.Y."/>
            <person name="Shea T.P."/>
            <person name="Creasy T.H."/>
            <person name="Haas B."/>
            <person name="Maiti R."/>
            <person name="Wu D."/>
            <person name="Peterson J."/>
            <person name="Van Aken S."/>
            <person name="Pai G."/>
            <person name="Militscher J."/>
            <person name="Sellers P."/>
            <person name="Gill J.E."/>
            <person name="Feldblyum T.V."/>
            <person name="Preuss D."/>
            <person name="Lin X."/>
            <person name="Nierman W.C."/>
            <person name="Salzberg S.L."/>
            <person name="White O."/>
            <person name="Venter J.C."/>
            <person name="Fraser C.M."/>
            <person name="Kaneko T."/>
            <person name="Nakamura Y."/>
            <person name="Sato S."/>
            <person name="Kato T."/>
            <person name="Asamizu E."/>
            <person name="Sasamoto S."/>
            <person name="Kimura T."/>
            <person name="Idesawa K."/>
            <person name="Kawashima K."/>
            <person name="Kishida Y."/>
            <person name="Kiyokawa C."/>
            <person name="Kohara M."/>
            <person name="Matsumoto M."/>
            <person name="Matsuno A."/>
            <person name="Muraki A."/>
            <person name="Nakayama S."/>
            <person name="Nakazaki N."/>
            <person name="Shinpo S."/>
            <person name="Takeuchi C."/>
            <person name="Wada T."/>
            <person name="Watanabe A."/>
            <person name="Yamada M."/>
            <person name="Yasuda M."/>
            <person name="Tabata S."/>
        </authorList>
    </citation>
    <scope>NUCLEOTIDE SEQUENCE [LARGE SCALE GENOMIC DNA]</scope>
    <source>
        <strain>cv. Columbia</strain>
    </source>
</reference>
<reference key="2">
    <citation type="journal article" date="2017" name="Plant J.">
        <title>Araport11: a complete reannotation of the Arabidopsis thaliana reference genome.</title>
        <authorList>
            <person name="Cheng C.Y."/>
            <person name="Krishnakumar V."/>
            <person name="Chan A.P."/>
            <person name="Thibaud-Nissen F."/>
            <person name="Schobel S."/>
            <person name="Town C.D."/>
        </authorList>
    </citation>
    <scope>GENOME REANNOTATION</scope>
    <source>
        <strain>cv. Columbia</strain>
    </source>
</reference>
<reference key="3">
    <citation type="journal article" date="2003" name="Science">
        <title>Empirical analysis of transcriptional activity in the Arabidopsis genome.</title>
        <authorList>
            <person name="Yamada K."/>
            <person name="Lim J."/>
            <person name="Dale J.M."/>
            <person name="Chen H."/>
            <person name="Shinn P."/>
            <person name="Palm C.J."/>
            <person name="Southwick A.M."/>
            <person name="Wu H.C."/>
            <person name="Kim C.J."/>
            <person name="Nguyen M."/>
            <person name="Pham P.K."/>
            <person name="Cheuk R.F."/>
            <person name="Karlin-Newmann G."/>
            <person name="Liu S.X."/>
            <person name="Lam B."/>
            <person name="Sakano H."/>
            <person name="Wu T."/>
            <person name="Yu G."/>
            <person name="Miranda M."/>
            <person name="Quach H.L."/>
            <person name="Tripp M."/>
            <person name="Chang C.H."/>
            <person name="Lee J.M."/>
            <person name="Toriumi M.J."/>
            <person name="Chan M.M."/>
            <person name="Tang C.C."/>
            <person name="Onodera C.S."/>
            <person name="Deng J.M."/>
            <person name="Akiyama K."/>
            <person name="Ansari Y."/>
            <person name="Arakawa T."/>
            <person name="Banh J."/>
            <person name="Banno F."/>
            <person name="Bowser L."/>
            <person name="Brooks S.Y."/>
            <person name="Carninci P."/>
            <person name="Chao Q."/>
            <person name="Choy N."/>
            <person name="Enju A."/>
            <person name="Goldsmith A.D."/>
            <person name="Gurjal M."/>
            <person name="Hansen N.F."/>
            <person name="Hayashizaki Y."/>
            <person name="Johnson-Hopson C."/>
            <person name="Hsuan V.W."/>
            <person name="Iida K."/>
            <person name="Karnes M."/>
            <person name="Khan S."/>
            <person name="Koesema E."/>
            <person name="Ishida J."/>
            <person name="Jiang P.X."/>
            <person name="Jones T."/>
            <person name="Kawai J."/>
            <person name="Kamiya A."/>
            <person name="Meyers C."/>
            <person name="Nakajima M."/>
            <person name="Narusaka M."/>
            <person name="Seki M."/>
            <person name="Sakurai T."/>
            <person name="Satou M."/>
            <person name="Tamse R."/>
            <person name="Vaysberg M."/>
            <person name="Wallender E.K."/>
            <person name="Wong C."/>
            <person name="Yamamura Y."/>
            <person name="Yuan S."/>
            <person name="Shinozaki K."/>
            <person name="Davis R.W."/>
            <person name="Theologis A."/>
            <person name="Ecker J.R."/>
        </authorList>
    </citation>
    <scope>NUCLEOTIDE SEQUENCE [LARGE SCALE MRNA]</scope>
    <source>
        <strain>cv. Columbia</strain>
    </source>
</reference>
<reference key="4">
    <citation type="journal article" date="2011" name="Plant Cell">
        <title>Patatin-related phospholipase pPLAIIIbeta-induced changes in lipid metabolism alter cellulose content and cell elongation in Arabidopsis.</title>
        <authorList>
            <person name="Li M."/>
            <person name="Bahn S.C."/>
            <person name="Guo L."/>
            <person name="Musgrave W."/>
            <person name="Berg H."/>
            <person name="Welti R."/>
            <person name="Wang X."/>
        </authorList>
    </citation>
    <scope>TISSUE SPECIFICITY</scope>
</reference>
<keyword id="KW-0378">Hydrolase</keyword>
<keyword id="KW-0442">Lipid degradation</keyword>
<keyword id="KW-0443">Lipid metabolism</keyword>
<keyword id="KW-1185">Reference proteome</keyword>
<protein>
    <recommendedName>
        <fullName>Probable inactive patatin-like protein 9</fullName>
        <shortName>AtPLP9</shortName>
    </recommendedName>
    <alternativeName>
        <fullName>Patatin-related phospholipase A IIIdelta</fullName>
        <shortName>pPLAIIId</shortName>
    </alternativeName>
    <alternativeName>
        <fullName>Phospholipase A IIIB</fullName>
        <shortName>AtPLAIIIB</shortName>
    </alternativeName>
</protein>
<evidence type="ECO:0000250" key="1"/>
<evidence type="ECO:0000255" key="2">
    <source>
        <dbReference type="PROSITE-ProRule" id="PRU01161"/>
    </source>
</evidence>
<evidence type="ECO:0000256" key="3">
    <source>
        <dbReference type="SAM" id="MobiDB-lite"/>
    </source>
</evidence>
<evidence type="ECO:0000269" key="4">
    <source>
    </source>
</evidence>
<evidence type="ECO:0000305" key="5"/>
<name>PLP9_ARATH</name>
<accession>Q93ZQ3</accession>
<accession>Q9M1W9</accession>
<sequence length="384" mass="41487">MEMDLSKVTLDIFTKLEQKWLSHCDSSRKTRILSIDGGGTTGIVAAASILHLEHQIRLQTGDPHAHISDFFDIVAGTGIGGILAALLVADDGSGRPMFTARDAVKFVAEKNSELFEIRYTGVFRRNKRYSGKSMERVLETAFRREDGKVLTMKDTCKPLLVPCYDLKTSAPFVFSRAGASESPSFDFELWKVCRATSATPSLFKPFSVVSVDGKTSCSAVDGGLVMNNPTAAAVTHVLHNKRDFPSVNGVDDLLVLSLGNGPSTMSSSPGRKLRRNGDYSTSSVVDIVVDGVSDTVDQMLGNAFCWNRTDYVRIQANGLTSGGAEELLKERGVETAPFGVKRILTESNGERIEGFVQRLVASGKSSLPPSPCKESAVNPLADGR</sequence>
<feature type="chain" id="PRO_0000425821" description="Probable inactive patatin-like protein 9">
    <location>
        <begin position="1"/>
        <end position="384"/>
    </location>
</feature>
<feature type="domain" description="PNPLA" evidence="2">
    <location>
        <begin position="33"/>
        <end position="234"/>
    </location>
</feature>
<feature type="region of interest" description="Disordered" evidence="3">
    <location>
        <begin position="363"/>
        <end position="384"/>
    </location>
</feature>
<feature type="short sequence motif" description="GXGXXG" evidence="2">
    <location>
        <begin position="37"/>
        <end position="42"/>
    </location>
</feature>
<feature type="short sequence motif" description="DGA/G" evidence="2">
    <location>
        <begin position="221"/>
        <end position="223"/>
    </location>
</feature>
<feature type="active site" description="Proton acceptor" evidence="1">
    <location>
        <position position="221"/>
    </location>
</feature>
<dbReference type="EMBL" id="AL138648">
    <property type="protein sequence ID" value="CAB86421.1"/>
    <property type="status" value="ALT_INIT"/>
    <property type="molecule type" value="Genomic_DNA"/>
</dbReference>
<dbReference type="EMBL" id="CP002686">
    <property type="protein sequence ID" value="AEE80447.1"/>
    <property type="molecule type" value="Genomic_DNA"/>
</dbReference>
<dbReference type="EMBL" id="AY056391">
    <property type="protein sequence ID" value="AAL08247.1"/>
    <property type="molecule type" value="mRNA"/>
</dbReference>
<dbReference type="EMBL" id="BT001015">
    <property type="protein sequence ID" value="AAN46769.1"/>
    <property type="molecule type" value="mRNA"/>
</dbReference>
<dbReference type="PIR" id="T48109">
    <property type="entry name" value="T48109"/>
</dbReference>
<dbReference type="RefSeq" id="NP_567142.1">
    <property type="nucleotide sequence ID" value="NM_116185.2"/>
</dbReference>
<dbReference type="SMR" id="Q93ZQ3"/>
<dbReference type="BioGRID" id="10809">
    <property type="interactions" value="6"/>
</dbReference>
<dbReference type="FunCoup" id="Q93ZQ3">
    <property type="interactions" value="250"/>
</dbReference>
<dbReference type="IntAct" id="Q93ZQ3">
    <property type="interactions" value="6"/>
</dbReference>
<dbReference type="STRING" id="3702.Q93ZQ3"/>
<dbReference type="GlyGen" id="Q93ZQ3">
    <property type="glycosylation" value="1 site"/>
</dbReference>
<dbReference type="iPTMnet" id="Q93ZQ3"/>
<dbReference type="PaxDb" id="3702-AT3G63200.1"/>
<dbReference type="ProteomicsDB" id="234772"/>
<dbReference type="EnsemblPlants" id="AT3G63200.1">
    <property type="protein sequence ID" value="AT3G63200.1"/>
    <property type="gene ID" value="AT3G63200"/>
</dbReference>
<dbReference type="GeneID" id="825495"/>
<dbReference type="Gramene" id="AT3G63200.1">
    <property type="protein sequence ID" value="AT3G63200.1"/>
    <property type="gene ID" value="AT3G63200"/>
</dbReference>
<dbReference type="KEGG" id="ath:AT3G63200"/>
<dbReference type="Araport" id="AT3G63200"/>
<dbReference type="TAIR" id="AT3G63200">
    <property type="gene designation" value="PLP9"/>
</dbReference>
<dbReference type="eggNOG" id="KOG0513">
    <property type="taxonomic scope" value="Eukaryota"/>
</dbReference>
<dbReference type="HOGENOM" id="CLU_000288_144_1_1"/>
<dbReference type="InParanoid" id="Q93ZQ3"/>
<dbReference type="OMA" id="SYDFDLW"/>
<dbReference type="PhylomeDB" id="Q93ZQ3"/>
<dbReference type="BRENDA" id="3.1.1.23">
    <property type="organism ID" value="399"/>
</dbReference>
<dbReference type="PRO" id="PR:Q93ZQ3"/>
<dbReference type="Proteomes" id="UP000006548">
    <property type="component" value="Chromosome 3"/>
</dbReference>
<dbReference type="ExpressionAtlas" id="Q93ZQ3">
    <property type="expression patterns" value="baseline and differential"/>
</dbReference>
<dbReference type="GO" id="GO:0016787">
    <property type="term" value="F:hydrolase activity"/>
    <property type="evidence" value="ECO:0007669"/>
    <property type="project" value="UniProtKB-KW"/>
</dbReference>
<dbReference type="GO" id="GO:0016042">
    <property type="term" value="P:lipid catabolic process"/>
    <property type="evidence" value="ECO:0007669"/>
    <property type="project" value="UniProtKB-KW"/>
</dbReference>
<dbReference type="CDD" id="cd07199">
    <property type="entry name" value="Pat17_PNPLA8_PNPLA9_like"/>
    <property type="match status" value="1"/>
</dbReference>
<dbReference type="Gene3D" id="3.40.1090.10">
    <property type="entry name" value="Cytosolic phospholipase A2 catalytic domain"/>
    <property type="match status" value="1"/>
</dbReference>
<dbReference type="InterPro" id="IPR016035">
    <property type="entry name" value="Acyl_Trfase/lysoPLipase"/>
</dbReference>
<dbReference type="InterPro" id="IPR002641">
    <property type="entry name" value="PNPLA_dom"/>
</dbReference>
<dbReference type="PANTHER" id="PTHR32241:SF13">
    <property type="entry name" value="INACTIVE PATATIN-LIKE PROTEIN 9-RELATED"/>
    <property type="match status" value="1"/>
</dbReference>
<dbReference type="PANTHER" id="PTHR32241">
    <property type="entry name" value="PATATIN-LIKE PROTEIN 6"/>
    <property type="match status" value="1"/>
</dbReference>
<dbReference type="Pfam" id="PF01734">
    <property type="entry name" value="Patatin"/>
    <property type="match status" value="1"/>
</dbReference>
<dbReference type="SUPFAM" id="SSF52151">
    <property type="entry name" value="FabD/lysophospholipase-like"/>
    <property type="match status" value="1"/>
</dbReference>
<dbReference type="PROSITE" id="PS51635">
    <property type="entry name" value="PNPLA"/>
    <property type="match status" value="1"/>
</dbReference>
<organism>
    <name type="scientific">Arabidopsis thaliana</name>
    <name type="common">Mouse-ear cress</name>
    <dbReference type="NCBI Taxonomy" id="3702"/>
    <lineage>
        <taxon>Eukaryota</taxon>
        <taxon>Viridiplantae</taxon>
        <taxon>Streptophyta</taxon>
        <taxon>Embryophyta</taxon>
        <taxon>Tracheophyta</taxon>
        <taxon>Spermatophyta</taxon>
        <taxon>Magnoliopsida</taxon>
        <taxon>eudicotyledons</taxon>
        <taxon>Gunneridae</taxon>
        <taxon>Pentapetalae</taxon>
        <taxon>rosids</taxon>
        <taxon>malvids</taxon>
        <taxon>Brassicales</taxon>
        <taxon>Brassicaceae</taxon>
        <taxon>Camelineae</taxon>
        <taxon>Arabidopsis</taxon>
    </lineage>
</organism>
<comment type="tissue specificity">
    <text evidence="4">Highly expressed in roots and at lower levels in flowers and siliques.</text>
</comment>
<comment type="similarity">
    <text evidence="5">Belongs to the patatin family.</text>
</comment>
<comment type="caution">
    <text evidence="5">Lacks the conserved Ser residue involved in nucleophilic attack and essential for hydrolase activity. Its enzyme activity is therefore unsure.</text>
</comment>
<comment type="sequence caution" evidence="5">
    <conflict type="erroneous initiation">
        <sequence resource="EMBL-CDS" id="CAB86421"/>
    </conflict>
    <text>Truncated N-terminus.</text>
</comment>
<proteinExistence type="evidence at transcript level"/>